<protein>
    <recommendedName>
        <fullName evidence="1">Putative 3-methyladenine DNA glycosylase</fullName>
        <ecNumber evidence="1">3.2.2.-</ecNumber>
    </recommendedName>
</protein>
<reference key="1">
    <citation type="journal article" date="2015" name="Proc. Natl. Acad. Sci. U.S.A.">
        <title>Trichodesmium genome maintains abundant, widespread noncoding DNA in situ, despite oligotrophic lifestyle.</title>
        <authorList>
            <person name="Walworth N."/>
            <person name="Pfreundt U."/>
            <person name="Nelson W.C."/>
            <person name="Mincer T."/>
            <person name="Heidelberg J.F."/>
            <person name="Fu F."/>
            <person name="Waterbury J.B."/>
            <person name="Glavina del Rio T."/>
            <person name="Goodwin L."/>
            <person name="Kyrpides N.C."/>
            <person name="Land M.L."/>
            <person name="Woyke T."/>
            <person name="Hutchins D.A."/>
            <person name="Hess W.R."/>
            <person name="Webb E.A."/>
        </authorList>
    </citation>
    <scope>NUCLEOTIDE SEQUENCE [LARGE SCALE GENOMIC DNA]</scope>
    <source>
        <strain>IMS101</strain>
    </source>
</reference>
<organism>
    <name type="scientific">Trichodesmium erythraeum (strain IMS101)</name>
    <dbReference type="NCBI Taxonomy" id="203124"/>
    <lineage>
        <taxon>Bacteria</taxon>
        <taxon>Bacillati</taxon>
        <taxon>Cyanobacteriota</taxon>
        <taxon>Cyanophyceae</taxon>
        <taxon>Oscillatoriophycideae</taxon>
        <taxon>Oscillatoriales</taxon>
        <taxon>Microcoleaceae</taxon>
        <taxon>Trichodesmium</taxon>
    </lineage>
</organism>
<dbReference type="EC" id="3.2.2.-" evidence="1"/>
<dbReference type="EMBL" id="CP000393">
    <property type="protein sequence ID" value="ABG51253.1"/>
    <property type="molecule type" value="Genomic_DNA"/>
</dbReference>
<dbReference type="RefSeq" id="WP_011611626.1">
    <property type="nucleotide sequence ID" value="NC_008312.1"/>
</dbReference>
<dbReference type="SMR" id="Q113S1"/>
<dbReference type="STRING" id="203124.Tery_2004"/>
<dbReference type="KEGG" id="ter:Tery_2004"/>
<dbReference type="eggNOG" id="COG2094">
    <property type="taxonomic scope" value="Bacteria"/>
</dbReference>
<dbReference type="HOGENOM" id="CLU_060471_4_0_3"/>
<dbReference type="OrthoDB" id="9794313at2"/>
<dbReference type="GO" id="GO:0003905">
    <property type="term" value="F:alkylbase DNA N-glycosylase activity"/>
    <property type="evidence" value="ECO:0007669"/>
    <property type="project" value="InterPro"/>
</dbReference>
<dbReference type="GO" id="GO:0003677">
    <property type="term" value="F:DNA binding"/>
    <property type="evidence" value="ECO:0007669"/>
    <property type="project" value="InterPro"/>
</dbReference>
<dbReference type="GO" id="GO:0006284">
    <property type="term" value="P:base-excision repair"/>
    <property type="evidence" value="ECO:0007669"/>
    <property type="project" value="InterPro"/>
</dbReference>
<dbReference type="CDD" id="cd00540">
    <property type="entry name" value="AAG"/>
    <property type="match status" value="1"/>
</dbReference>
<dbReference type="Gene3D" id="3.10.300.10">
    <property type="entry name" value="Methylpurine-DNA glycosylase (MPG)"/>
    <property type="match status" value="1"/>
</dbReference>
<dbReference type="HAMAP" id="MF_00527">
    <property type="entry name" value="3MGH"/>
    <property type="match status" value="1"/>
</dbReference>
<dbReference type="InterPro" id="IPR011034">
    <property type="entry name" value="Formyl_transferase-like_C_sf"/>
</dbReference>
<dbReference type="InterPro" id="IPR003180">
    <property type="entry name" value="MPG"/>
</dbReference>
<dbReference type="InterPro" id="IPR036995">
    <property type="entry name" value="MPG_sf"/>
</dbReference>
<dbReference type="NCBIfam" id="TIGR00567">
    <property type="entry name" value="3mg"/>
    <property type="match status" value="1"/>
</dbReference>
<dbReference type="PANTHER" id="PTHR10429">
    <property type="entry name" value="DNA-3-METHYLADENINE GLYCOSYLASE"/>
    <property type="match status" value="1"/>
</dbReference>
<dbReference type="PANTHER" id="PTHR10429:SF0">
    <property type="entry name" value="DNA-3-METHYLADENINE GLYCOSYLASE"/>
    <property type="match status" value="1"/>
</dbReference>
<dbReference type="Pfam" id="PF02245">
    <property type="entry name" value="Pur_DNA_glyco"/>
    <property type="match status" value="1"/>
</dbReference>
<dbReference type="SUPFAM" id="SSF50486">
    <property type="entry name" value="FMT C-terminal domain-like"/>
    <property type="match status" value="1"/>
</dbReference>
<keyword id="KW-0227">DNA damage</keyword>
<keyword id="KW-0234">DNA repair</keyword>
<keyword id="KW-0378">Hydrolase</keyword>
<sequence length="201" mass="22750">MANNEVIENTWLERPSPEVAPELIGCTLVRRISEEKIIRSTIVETEAYAPGDPACHAYRKRTPRNTVMFGPPGISYVFLIYGMYHCLNVVTDIDGIPSVVLIRALQLESVPNWLWEHIPKQKSKPKVSRLAAGPGKLCRLLNIDLNLNGSRLRAGQPMWLEQRSPSFEKNLQIVQTTRIGITKGTNLLWRWYLANCDAVSK</sequence>
<feature type="chain" id="PRO_0000265068" description="Putative 3-methyladenine DNA glycosylase">
    <location>
        <begin position="1"/>
        <end position="201"/>
    </location>
</feature>
<gene>
    <name type="ordered locus">Tery_2004</name>
</gene>
<name>3MGH_TRIEI</name>
<evidence type="ECO:0000255" key="1">
    <source>
        <dbReference type="HAMAP-Rule" id="MF_00527"/>
    </source>
</evidence>
<accession>Q113S1</accession>
<comment type="similarity">
    <text evidence="1">Belongs to the DNA glycosylase MPG family.</text>
</comment>
<proteinExistence type="inferred from homology"/>